<gene>
    <name evidence="1" type="primary">rpsH</name>
    <name type="ordered locus">AAur_2935</name>
</gene>
<keyword id="KW-0687">Ribonucleoprotein</keyword>
<keyword id="KW-0689">Ribosomal protein</keyword>
<keyword id="KW-0694">RNA-binding</keyword>
<keyword id="KW-0699">rRNA-binding</keyword>
<dbReference type="EMBL" id="CP000474">
    <property type="protein sequence ID" value="ABM09543.1"/>
    <property type="molecule type" value="Genomic_DNA"/>
</dbReference>
<dbReference type="RefSeq" id="WP_011775584.1">
    <property type="nucleotide sequence ID" value="NC_008711.1"/>
</dbReference>
<dbReference type="SMR" id="A1R8T2"/>
<dbReference type="STRING" id="290340.AAur_2935"/>
<dbReference type="GeneID" id="97301779"/>
<dbReference type="KEGG" id="aau:AAur_2935"/>
<dbReference type="eggNOG" id="COG0096">
    <property type="taxonomic scope" value="Bacteria"/>
</dbReference>
<dbReference type="HOGENOM" id="CLU_098428_0_1_11"/>
<dbReference type="OrthoDB" id="9802617at2"/>
<dbReference type="Proteomes" id="UP000000637">
    <property type="component" value="Chromosome"/>
</dbReference>
<dbReference type="GO" id="GO:1990904">
    <property type="term" value="C:ribonucleoprotein complex"/>
    <property type="evidence" value="ECO:0007669"/>
    <property type="project" value="UniProtKB-KW"/>
</dbReference>
<dbReference type="GO" id="GO:0005840">
    <property type="term" value="C:ribosome"/>
    <property type="evidence" value="ECO:0007669"/>
    <property type="project" value="UniProtKB-KW"/>
</dbReference>
<dbReference type="GO" id="GO:0019843">
    <property type="term" value="F:rRNA binding"/>
    <property type="evidence" value="ECO:0007669"/>
    <property type="project" value="UniProtKB-UniRule"/>
</dbReference>
<dbReference type="GO" id="GO:0003735">
    <property type="term" value="F:structural constituent of ribosome"/>
    <property type="evidence" value="ECO:0007669"/>
    <property type="project" value="InterPro"/>
</dbReference>
<dbReference type="GO" id="GO:0006412">
    <property type="term" value="P:translation"/>
    <property type="evidence" value="ECO:0007669"/>
    <property type="project" value="UniProtKB-UniRule"/>
</dbReference>
<dbReference type="FunFam" id="3.30.1370.30:FF:000002">
    <property type="entry name" value="30S ribosomal protein S8"/>
    <property type="match status" value="1"/>
</dbReference>
<dbReference type="FunFam" id="3.30.1490.10:FF:000001">
    <property type="entry name" value="30S ribosomal protein S8"/>
    <property type="match status" value="1"/>
</dbReference>
<dbReference type="Gene3D" id="3.30.1370.30">
    <property type="match status" value="1"/>
</dbReference>
<dbReference type="Gene3D" id="3.30.1490.10">
    <property type="match status" value="1"/>
</dbReference>
<dbReference type="HAMAP" id="MF_01302_B">
    <property type="entry name" value="Ribosomal_uS8_B"/>
    <property type="match status" value="1"/>
</dbReference>
<dbReference type="InterPro" id="IPR000630">
    <property type="entry name" value="Ribosomal_uS8"/>
</dbReference>
<dbReference type="InterPro" id="IPR035987">
    <property type="entry name" value="Ribosomal_uS8_sf"/>
</dbReference>
<dbReference type="NCBIfam" id="NF001109">
    <property type="entry name" value="PRK00136.1"/>
    <property type="match status" value="1"/>
</dbReference>
<dbReference type="PANTHER" id="PTHR11758">
    <property type="entry name" value="40S RIBOSOMAL PROTEIN S15A"/>
    <property type="match status" value="1"/>
</dbReference>
<dbReference type="Pfam" id="PF00410">
    <property type="entry name" value="Ribosomal_S8"/>
    <property type="match status" value="1"/>
</dbReference>
<dbReference type="SUPFAM" id="SSF56047">
    <property type="entry name" value="Ribosomal protein S8"/>
    <property type="match status" value="1"/>
</dbReference>
<organism>
    <name type="scientific">Paenarthrobacter aurescens (strain TC1)</name>
    <dbReference type="NCBI Taxonomy" id="290340"/>
    <lineage>
        <taxon>Bacteria</taxon>
        <taxon>Bacillati</taxon>
        <taxon>Actinomycetota</taxon>
        <taxon>Actinomycetes</taxon>
        <taxon>Micrococcales</taxon>
        <taxon>Micrococcaceae</taxon>
        <taxon>Paenarthrobacter</taxon>
    </lineage>
</organism>
<sequence length="132" mass="14274">MTMTDPVADMLTRLRNANSAYHDTVSMPYSKLKARVADILKAEGYIAGWKEEDAEVGKKLTIDLKFGPNRERSIAGVRRISKPGLRVYAKSTNLPHVLGGLGIAILSTSSGLLTDKQAGKKGVGGEVLAYVW</sequence>
<comment type="function">
    <text evidence="1">One of the primary rRNA binding proteins, it binds directly to 16S rRNA central domain where it helps coordinate assembly of the platform of the 30S subunit.</text>
</comment>
<comment type="subunit">
    <text evidence="1">Part of the 30S ribosomal subunit. Contacts proteins S5 and S12.</text>
</comment>
<comment type="similarity">
    <text evidence="1">Belongs to the universal ribosomal protein uS8 family.</text>
</comment>
<evidence type="ECO:0000255" key="1">
    <source>
        <dbReference type="HAMAP-Rule" id="MF_01302"/>
    </source>
</evidence>
<evidence type="ECO:0000305" key="2"/>
<accession>A1R8T2</accession>
<proteinExistence type="inferred from homology"/>
<name>RS8_PAEAT</name>
<protein>
    <recommendedName>
        <fullName evidence="1">Small ribosomal subunit protein uS8</fullName>
    </recommendedName>
    <alternativeName>
        <fullName evidence="2">30S ribosomal protein S8</fullName>
    </alternativeName>
</protein>
<feature type="chain" id="PRO_0000290799" description="Small ribosomal subunit protein uS8">
    <location>
        <begin position="1"/>
        <end position="132"/>
    </location>
</feature>
<reference key="1">
    <citation type="journal article" date="2006" name="PLoS Genet.">
        <title>Secrets of soil survival revealed by the genome sequence of Arthrobacter aurescens TC1.</title>
        <authorList>
            <person name="Mongodin E.F."/>
            <person name="Shapir N."/>
            <person name="Daugherty S.C."/>
            <person name="DeBoy R.T."/>
            <person name="Emerson J.B."/>
            <person name="Shvartzbeyn A."/>
            <person name="Radune D."/>
            <person name="Vamathevan J."/>
            <person name="Riggs F."/>
            <person name="Grinberg V."/>
            <person name="Khouri H.M."/>
            <person name="Wackett L.P."/>
            <person name="Nelson K.E."/>
            <person name="Sadowsky M.J."/>
        </authorList>
    </citation>
    <scope>NUCLEOTIDE SEQUENCE [LARGE SCALE GENOMIC DNA]</scope>
    <source>
        <strain>TC1</strain>
    </source>
</reference>